<feature type="chain" id="PRO_0000130387" description="Large ribosomal subunit protein uL29">
    <location>
        <begin position="1"/>
        <end position="67"/>
    </location>
</feature>
<proteinExistence type="inferred from homology"/>
<comment type="similarity">
    <text evidence="1">Belongs to the universal ribosomal protein uL29 family.</text>
</comment>
<dbReference type="EMBL" id="CR925677">
    <property type="protein sequence ID" value="CAI28073.1"/>
    <property type="molecule type" value="Genomic_DNA"/>
</dbReference>
<dbReference type="RefSeq" id="WP_011155281.1">
    <property type="nucleotide sequence ID" value="NC_006831.1"/>
</dbReference>
<dbReference type="SMR" id="Q5FFU8"/>
<dbReference type="GeneID" id="33057733"/>
<dbReference type="KEGG" id="erg:ERGA_CDS_06210"/>
<dbReference type="HOGENOM" id="CLU_158491_4_0_5"/>
<dbReference type="OrthoDB" id="9815192at2"/>
<dbReference type="Proteomes" id="UP000000533">
    <property type="component" value="Chromosome"/>
</dbReference>
<dbReference type="GO" id="GO:1990904">
    <property type="term" value="C:ribonucleoprotein complex"/>
    <property type="evidence" value="ECO:0007669"/>
    <property type="project" value="UniProtKB-KW"/>
</dbReference>
<dbReference type="GO" id="GO:0005840">
    <property type="term" value="C:ribosome"/>
    <property type="evidence" value="ECO:0007669"/>
    <property type="project" value="UniProtKB-KW"/>
</dbReference>
<dbReference type="GO" id="GO:0003735">
    <property type="term" value="F:structural constituent of ribosome"/>
    <property type="evidence" value="ECO:0007669"/>
    <property type="project" value="InterPro"/>
</dbReference>
<dbReference type="GO" id="GO:0006412">
    <property type="term" value="P:translation"/>
    <property type="evidence" value="ECO:0007669"/>
    <property type="project" value="UniProtKB-UniRule"/>
</dbReference>
<dbReference type="CDD" id="cd00427">
    <property type="entry name" value="Ribosomal_L29_HIP"/>
    <property type="match status" value="1"/>
</dbReference>
<dbReference type="Gene3D" id="1.10.287.310">
    <property type="match status" value="1"/>
</dbReference>
<dbReference type="HAMAP" id="MF_00374">
    <property type="entry name" value="Ribosomal_uL29"/>
    <property type="match status" value="1"/>
</dbReference>
<dbReference type="InterPro" id="IPR001854">
    <property type="entry name" value="Ribosomal_uL29"/>
</dbReference>
<dbReference type="InterPro" id="IPR036049">
    <property type="entry name" value="Ribosomal_uL29_sf"/>
</dbReference>
<dbReference type="NCBIfam" id="TIGR00012">
    <property type="entry name" value="L29"/>
    <property type="match status" value="1"/>
</dbReference>
<dbReference type="Pfam" id="PF00831">
    <property type="entry name" value="Ribosomal_L29"/>
    <property type="match status" value="1"/>
</dbReference>
<dbReference type="SUPFAM" id="SSF46561">
    <property type="entry name" value="Ribosomal protein L29 (L29p)"/>
    <property type="match status" value="1"/>
</dbReference>
<gene>
    <name evidence="1" type="primary">rpmC</name>
    <name type="ordered locus">ERGA_CDS_06210</name>
</gene>
<accession>Q5FFU8</accession>
<sequence>MDIIDIRSKTNDELHELLFNLRKELIDVILTKKLDKSHNHFYGSNIKKDIARILTVLSERKNEVKNV</sequence>
<organism>
    <name type="scientific">Ehrlichia ruminantium (strain Gardel)</name>
    <dbReference type="NCBI Taxonomy" id="302409"/>
    <lineage>
        <taxon>Bacteria</taxon>
        <taxon>Pseudomonadati</taxon>
        <taxon>Pseudomonadota</taxon>
        <taxon>Alphaproteobacteria</taxon>
        <taxon>Rickettsiales</taxon>
        <taxon>Anaplasmataceae</taxon>
        <taxon>Ehrlichia</taxon>
    </lineage>
</organism>
<evidence type="ECO:0000255" key="1">
    <source>
        <dbReference type="HAMAP-Rule" id="MF_00374"/>
    </source>
</evidence>
<evidence type="ECO:0000305" key="2"/>
<keyword id="KW-0687">Ribonucleoprotein</keyword>
<keyword id="KW-0689">Ribosomal protein</keyword>
<reference key="1">
    <citation type="journal article" date="2006" name="J. Bacteriol.">
        <title>Comparative genomic analysis of three strains of Ehrlichia ruminantium reveals an active process of genome size plasticity.</title>
        <authorList>
            <person name="Frutos R."/>
            <person name="Viari A."/>
            <person name="Ferraz C."/>
            <person name="Morgat A."/>
            <person name="Eychenie S."/>
            <person name="Kandassamy Y."/>
            <person name="Chantal I."/>
            <person name="Bensaid A."/>
            <person name="Coissac E."/>
            <person name="Vachiery N."/>
            <person name="Demaille J."/>
            <person name="Martinez D."/>
        </authorList>
    </citation>
    <scope>NUCLEOTIDE SEQUENCE [LARGE SCALE GENOMIC DNA]</scope>
    <source>
        <strain>Gardel</strain>
    </source>
</reference>
<name>RL29_EHRRG</name>
<protein>
    <recommendedName>
        <fullName evidence="1">Large ribosomal subunit protein uL29</fullName>
    </recommendedName>
    <alternativeName>
        <fullName evidence="2">50S ribosomal protein L29</fullName>
    </alternativeName>
</protein>